<reference key="1">
    <citation type="journal article" date="1991" name="Genes Dev.">
        <title>A cold-sensitive mRNA splicing mutant is a member of the RNA helicase gene family.</title>
        <authorList>
            <person name="Strauss E.J."/>
            <person name="Guthrie C."/>
        </authorList>
    </citation>
    <scope>NUCLEOTIDE SEQUENCE [GENOMIC DNA]</scope>
    <scope>FUNCTION</scope>
    <scope>MUTAGENESIS OF GLY-297</scope>
    <source>
        <strain>YJJ48</strain>
    </source>
</reference>
<reference key="2">
    <citation type="journal article" date="1997" name="Nature">
        <title>The nucleotide sequence of Saccharomyces cerevisiae chromosome IV.</title>
        <authorList>
            <person name="Jacq C."/>
            <person name="Alt-Moerbe J."/>
            <person name="Andre B."/>
            <person name="Arnold W."/>
            <person name="Bahr A."/>
            <person name="Ballesta J.P.G."/>
            <person name="Bargues M."/>
            <person name="Baron L."/>
            <person name="Becker A."/>
            <person name="Biteau N."/>
            <person name="Bloecker H."/>
            <person name="Blugeon C."/>
            <person name="Boskovic J."/>
            <person name="Brandt P."/>
            <person name="Brueckner M."/>
            <person name="Buitrago M.J."/>
            <person name="Coster F."/>
            <person name="Delaveau T."/>
            <person name="del Rey F."/>
            <person name="Dujon B."/>
            <person name="Eide L.G."/>
            <person name="Garcia-Cantalejo J.M."/>
            <person name="Goffeau A."/>
            <person name="Gomez-Peris A."/>
            <person name="Granotier C."/>
            <person name="Hanemann V."/>
            <person name="Hankeln T."/>
            <person name="Hoheisel J.D."/>
            <person name="Jaeger W."/>
            <person name="Jimenez A."/>
            <person name="Jonniaux J.-L."/>
            <person name="Kraemer C."/>
            <person name="Kuester H."/>
            <person name="Laamanen P."/>
            <person name="Legros Y."/>
            <person name="Louis E.J."/>
            <person name="Moeller-Rieker S."/>
            <person name="Monnet A."/>
            <person name="Moro M."/>
            <person name="Mueller-Auer S."/>
            <person name="Nussbaumer B."/>
            <person name="Paricio N."/>
            <person name="Paulin L."/>
            <person name="Perea J."/>
            <person name="Perez-Alonso M."/>
            <person name="Perez-Ortin J.E."/>
            <person name="Pohl T.M."/>
            <person name="Prydz H."/>
            <person name="Purnelle B."/>
            <person name="Rasmussen S.W."/>
            <person name="Remacha M.A."/>
            <person name="Revuelta J.L."/>
            <person name="Rieger M."/>
            <person name="Salom D."/>
            <person name="Saluz H.P."/>
            <person name="Saiz J.E."/>
            <person name="Saren A.-M."/>
            <person name="Schaefer M."/>
            <person name="Scharfe M."/>
            <person name="Schmidt E.R."/>
            <person name="Schneider C."/>
            <person name="Scholler P."/>
            <person name="Schwarz S."/>
            <person name="Soler-Mira A."/>
            <person name="Urrestarazu L.A."/>
            <person name="Verhasselt P."/>
            <person name="Vissers S."/>
            <person name="Voet M."/>
            <person name="Volckaert G."/>
            <person name="Wagner G."/>
            <person name="Wambutt R."/>
            <person name="Wedler E."/>
            <person name="Wedler H."/>
            <person name="Woelfl S."/>
            <person name="Harris D.E."/>
            <person name="Bowman S."/>
            <person name="Brown D."/>
            <person name="Churcher C.M."/>
            <person name="Connor R."/>
            <person name="Dedman K."/>
            <person name="Gentles S."/>
            <person name="Hamlin N."/>
            <person name="Hunt S."/>
            <person name="Jones L."/>
            <person name="McDonald S."/>
            <person name="Murphy L.D."/>
            <person name="Niblett D."/>
            <person name="Odell C."/>
            <person name="Oliver K."/>
            <person name="Rajandream M.A."/>
            <person name="Richards C."/>
            <person name="Shore L."/>
            <person name="Walsh S.V."/>
            <person name="Barrell B.G."/>
            <person name="Dietrich F.S."/>
            <person name="Mulligan J.T."/>
            <person name="Allen E."/>
            <person name="Araujo R."/>
            <person name="Aviles E."/>
            <person name="Berno A."/>
            <person name="Carpenter J."/>
            <person name="Chen E."/>
            <person name="Cherry J.M."/>
            <person name="Chung E."/>
            <person name="Duncan M."/>
            <person name="Hunicke-Smith S."/>
            <person name="Hyman R.W."/>
            <person name="Komp C."/>
            <person name="Lashkari D."/>
            <person name="Lew H."/>
            <person name="Lin D."/>
            <person name="Mosedale D."/>
            <person name="Nakahara K."/>
            <person name="Namath A."/>
            <person name="Oefner P."/>
            <person name="Oh C."/>
            <person name="Petel F.X."/>
            <person name="Roberts D."/>
            <person name="Schramm S."/>
            <person name="Schroeder M."/>
            <person name="Shogren T."/>
            <person name="Shroff N."/>
            <person name="Winant A."/>
            <person name="Yelton M.A."/>
            <person name="Botstein D."/>
            <person name="Davis R.W."/>
            <person name="Johnston M."/>
            <person name="Andrews S."/>
            <person name="Brinkman R."/>
            <person name="Cooper J."/>
            <person name="Ding H."/>
            <person name="Du Z."/>
            <person name="Favello A."/>
            <person name="Fulton L."/>
            <person name="Gattung S."/>
            <person name="Greco T."/>
            <person name="Hallsworth K."/>
            <person name="Hawkins J."/>
            <person name="Hillier L.W."/>
            <person name="Jier M."/>
            <person name="Johnson D."/>
            <person name="Johnston L."/>
            <person name="Kirsten J."/>
            <person name="Kucaba T."/>
            <person name="Langston Y."/>
            <person name="Latreille P."/>
            <person name="Le T."/>
            <person name="Mardis E."/>
            <person name="Menezes S."/>
            <person name="Miller N."/>
            <person name="Nhan M."/>
            <person name="Pauley A."/>
            <person name="Peluso D."/>
            <person name="Rifkin L."/>
            <person name="Riles L."/>
            <person name="Taich A."/>
            <person name="Trevaskis E."/>
            <person name="Vignati D."/>
            <person name="Wilcox L."/>
            <person name="Wohldman P."/>
            <person name="Vaudin M."/>
            <person name="Wilson R."/>
            <person name="Waterston R."/>
            <person name="Albermann K."/>
            <person name="Hani J."/>
            <person name="Heumann K."/>
            <person name="Kleine K."/>
            <person name="Mewes H.-W."/>
            <person name="Zollner A."/>
            <person name="Zaccaria P."/>
        </authorList>
    </citation>
    <scope>NUCLEOTIDE SEQUENCE [LARGE SCALE GENOMIC DNA]</scope>
    <source>
        <strain>ATCC 204508 / S288c</strain>
    </source>
</reference>
<reference key="3">
    <citation type="journal article" date="2014" name="G3 (Bethesda)">
        <title>The reference genome sequence of Saccharomyces cerevisiae: Then and now.</title>
        <authorList>
            <person name="Engel S.R."/>
            <person name="Dietrich F.S."/>
            <person name="Fisk D.G."/>
            <person name="Binkley G."/>
            <person name="Balakrishnan R."/>
            <person name="Costanzo M.C."/>
            <person name="Dwight S.S."/>
            <person name="Hitz B.C."/>
            <person name="Karra K."/>
            <person name="Nash R.S."/>
            <person name="Weng S."/>
            <person name="Wong E.D."/>
            <person name="Lloyd P."/>
            <person name="Skrzypek M.S."/>
            <person name="Miyasato S.R."/>
            <person name="Simison M."/>
            <person name="Cherry J.M."/>
        </authorList>
    </citation>
    <scope>GENOME REANNOTATION</scope>
    <source>
        <strain>ATCC 204508 / S288c</strain>
    </source>
</reference>
<reference key="4">
    <citation type="journal article" date="1990" name="Proc. Natl. Acad. Sci. U.S.A.">
        <title>Identification of five putative yeast RNA helicase genes.</title>
        <authorList>
            <person name="Chang T.-H."/>
            <person name="Arenas J."/>
            <person name="Abelson J."/>
        </authorList>
    </citation>
    <scope>NUCLEOTIDE SEQUENCE [GENOMIC DNA] OF 339-526</scope>
</reference>
<reference key="5">
    <citation type="journal article" date="1994" name="Nucleic Acids Res.">
        <title>PRP28, a 'DEAD-box' protein, is required for the first step of mRNA splicing in vitro.</title>
        <authorList>
            <person name="Strauss E.J."/>
            <person name="Guthrie C."/>
        </authorList>
    </citation>
    <scope>CHARACTERIZATION</scope>
</reference>
<reference key="6">
    <citation type="journal article" date="1997" name="Nucleic Acids Res.">
        <title>Genetic interactions of conserved regions in the DEAD-box protein Prp28p.</title>
        <authorList>
            <person name="Chang T.-H."/>
            <person name="Latus L.J."/>
            <person name="Liu Z."/>
            <person name="Abbott J.M."/>
        </authorList>
    </citation>
    <scope>MUTAGENESIS OF ALA-221; THR-223; ARG-264; GLU-265; THR-317; GLY-319; MET-376; ALA-379; PRO-438; ILE-440; PHE-442; ALA-449; HIS-468; ASN-486; MET-491; ARG-499; ASP-502; TYR-521; ARG-527; VAL-541; ASP-546; LEU-549; LYS-580; ASN-584 AND ILE-586</scope>
</reference>
<reference key="7">
    <citation type="journal article" date="1999" name="Mol. Cell">
        <title>An RNA switch at the 5' splice site requires ATP and the DEAD box protein Prp28p.</title>
        <authorList>
            <person name="Staley J.P."/>
            <person name="Guthrie C."/>
        </authorList>
    </citation>
    <scope>FUNCTION</scope>
</reference>
<reference key="8">
    <citation type="journal article" date="2001" name="Mol. Cell">
        <title>Specific alterations of U1-C protein or U1 small nuclear RNA can eliminate the requirement of Prp28p, an essential DEAD box splicing factor.</title>
        <authorList>
            <person name="Chen J.Y.-F."/>
            <person name="Stands L."/>
            <person name="Staley J.P."/>
            <person name="Jackups R.R. Jr."/>
            <person name="Latus L.J."/>
            <person name="Chang T.-H."/>
        </authorList>
    </citation>
    <scope>FUNCTION</scope>
</reference>
<reference key="9">
    <citation type="journal article" date="2001" name="RNA">
        <title>Biochemical and genetic analyses of the U5, U6, and U4/U6 x U5 small nuclear ribonucleoproteins from Saccharomyces cerevisiae.</title>
        <authorList>
            <person name="Stevens S.W."/>
            <person name="Barta I."/>
            <person name="Ge H.Y."/>
            <person name="Moore R.E."/>
            <person name="Young M.K."/>
            <person name="Lee T.D."/>
            <person name="Abelson J."/>
        </authorList>
    </citation>
    <scope>IDENTIFICATION IN THE U5 SNRNP COMPLEX</scope>
    <scope>IDENTIFICATION BY MASS SPECTROMETRY</scope>
</reference>
<reference key="10">
    <citation type="journal article" date="2003" name="Nature">
        <title>Global analysis of protein localization in budding yeast.</title>
        <authorList>
            <person name="Huh W.-K."/>
            <person name="Falvo J.V."/>
            <person name="Gerke L.C."/>
            <person name="Carroll A.S."/>
            <person name="Howson R.W."/>
            <person name="Weissman J.S."/>
            <person name="O'Shea E.K."/>
        </authorList>
    </citation>
    <scope>SUBCELLULAR LOCATION [LARGE SCALE ANALYSIS]</scope>
</reference>
<reference key="11">
    <citation type="journal article" date="2009" name="Science">
        <title>Global analysis of Cdk1 substrate phosphorylation sites provides insights into evolution.</title>
        <authorList>
            <person name="Holt L.J."/>
            <person name="Tuch B.B."/>
            <person name="Villen J."/>
            <person name="Johnson A.D."/>
            <person name="Gygi S.P."/>
            <person name="Morgan D.O."/>
        </authorList>
    </citation>
    <scope>PHOSPHORYLATION [LARGE SCALE ANALYSIS] AT SER-69</scope>
    <scope>IDENTIFICATION BY MASS SPECTROMETRY [LARGE SCALE ANALYSIS]</scope>
</reference>
<organism>
    <name type="scientific">Saccharomyces cerevisiae (strain ATCC 204508 / S288c)</name>
    <name type="common">Baker's yeast</name>
    <dbReference type="NCBI Taxonomy" id="559292"/>
    <lineage>
        <taxon>Eukaryota</taxon>
        <taxon>Fungi</taxon>
        <taxon>Dikarya</taxon>
        <taxon>Ascomycota</taxon>
        <taxon>Saccharomycotina</taxon>
        <taxon>Saccharomycetes</taxon>
        <taxon>Saccharomycetales</taxon>
        <taxon>Saccharomycetaceae</taxon>
        <taxon>Saccharomyces</taxon>
    </lineage>
</organism>
<sequence>MARPIDVSQLIAGINKKKGLDENTSGKISKPRFLNKQERSKQERLKENEESLTPTQSDSAKVEIKKVNSRDDSFFNETNDKKRNPSKQNGSKFHFSWNESEDTLSGYDPIVSTRAIDLLWKGKTPKNAAESSYMGKHWTEKSLHEMNERDWRILKEDYAIVTKGGTVENPLRNWEELNIIPRDLLRVIIQELRFPSPTPIQRITIPNVCNMKQYRDFLGVASTGSGKTLAFVIPILIKMSRSPPRPPSLKIIDGPKALILAPTRELVQQIQKETQKVTKIWSKESNYDCKVISIVGGHSLEEISFSLSEGCDILVATPGRLIDSLENHLLVMKQVETLVLDEADKMIDLGFEDQVTNILTKVDINADSAVNRQTLMFTATMTPVIEKIAAGYMQKPVYATIGVETGSEPLIQQVVEYADNDEDKFKKLKPIVAKYDPPIIIFINYKQTADWLAEKFQKETNMKVTILHGSKSQEQREHSLQLFRTNKVQIMIATNVAARGLDIPNVSLVVNFQISKKMDDYIHRIGRTGRAANEGTAVSFVSAAEDESLIRELYKYVRKHDPLNSNIFSEAVKNKYNVGKQLSNEIIY</sequence>
<keyword id="KW-0002">3D-structure</keyword>
<keyword id="KW-0067">ATP-binding</keyword>
<keyword id="KW-0963">Cytoplasm</keyword>
<keyword id="KW-0347">Helicase</keyword>
<keyword id="KW-0378">Hydrolase</keyword>
<keyword id="KW-0507">mRNA processing</keyword>
<keyword id="KW-0508">mRNA splicing</keyword>
<keyword id="KW-0547">Nucleotide-binding</keyword>
<keyword id="KW-0539">Nucleus</keyword>
<keyword id="KW-0597">Phosphoprotein</keyword>
<keyword id="KW-1185">Reference proteome</keyword>
<comment type="function">
    <text evidence="4 5 8">ATP-dependent RNA helicase involved in mRNA splicing. May destabilize the U1/5'-splice site duplex to permit an effective competition for the 5'-splice site by the U6 snRNA, resulting in the switch between U1 and U6 at the 5'-splice site. May also act to unwind the U4/U6 base-pairing interaction in the U4/U6/U5 snRNP, facilitating the first covalent step of splicing.</text>
</comment>
<comment type="catalytic activity">
    <reaction>
        <text>ATP + H2O = ADP + phosphate + H(+)</text>
        <dbReference type="Rhea" id="RHEA:13065"/>
        <dbReference type="ChEBI" id="CHEBI:15377"/>
        <dbReference type="ChEBI" id="CHEBI:15378"/>
        <dbReference type="ChEBI" id="CHEBI:30616"/>
        <dbReference type="ChEBI" id="CHEBI:43474"/>
        <dbReference type="ChEBI" id="CHEBI:456216"/>
        <dbReference type="EC" id="3.6.4.13"/>
    </reaction>
</comment>
<comment type="subunit">
    <text evidence="6">Component of the U5 snRNP complex, composed of at least BRR2, PRP8, PRP28, DIB1, LIN1, SMB1, SMD1, SMD2, SMD3, SME1, SMX2, SMX3, and SNU114, associated with the U5 snRNA.</text>
</comment>
<comment type="subcellular location">
    <subcellularLocation>
        <location evidence="7">Cytoplasm</location>
    </subcellularLocation>
    <subcellularLocation>
        <location evidence="7">Nucleus</location>
    </subcellularLocation>
</comment>
<comment type="domain">
    <text>The Q motif is unique to and characteristic of the DEAD box family of RNA helicases and controls ATP binding and hydrolysis.</text>
</comment>
<comment type="similarity">
    <text evidence="10">Belongs to the DEAD box helicase family. DDX23/PRP28 subfamily.</text>
</comment>
<protein>
    <recommendedName>
        <fullName>Pre-mRNA-splicing ATP-dependent RNA helicase PRP28</fullName>
        <ecNumber>3.6.4.13</ecNumber>
    </recommendedName>
    <alternativeName>
        <fullName>Helicase CA8</fullName>
    </alternativeName>
</protein>
<feature type="chain" id="PRO_0000055127" description="Pre-mRNA-splicing ATP-dependent RNA helicase PRP28">
    <location>
        <begin position="1"/>
        <end position="588"/>
    </location>
</feature>
<feature type="domain" description="Helicase ATP-binding" evidence="1">
    <location>
        <begin position="208"/>
        <end position="399"/>
    </location>
</feature>
<feature type="domain" description="Helicase C-terminal" evidence="2">
    <location>
        <begin position="427"/>
        <end position="579"/>
    </location>
</feature>
<feature type="region of interest" description="Disordered" evidence="3">
    <location>
        <begin position="15"/>
        <end position="94"/>
    </location>
</feature>
<feature type="short sequence motif" description="Q motif">
    <location>
        <begin position="172"/>
        <end position="202"/>
    </location>
</feature>
<feature type="short sequence motif" description="DEAD box">
    <location>
        <begin position="341"/>
        <end position="344"/>
    </location>
</feature>
<feature type="compositionally biased region" description="Basic and acidic residues" evidence="3">
    <location>
        <begin position="35"/>
        <end position="49"/>
    </location>
</feature>
<feature type="compositionally biased region" description="Basic and acidic residues" evidence="3">
    <location>
        <begin position="60"/>
        <end position="83"/>
    </location>
</feature>
<feature type="binding site" evidence="1">
    <location>
        <begin position="221"/>
        <end position="228"/>
    </location>
    <ligand>
        <name>ATP</name>
        <dbReference type="ChEBI" id="CHEBI:30616"/>
    </ligand>
</feature>
<feature type="modified residue" description="Phosphoserine" evidence="11">
    <location>
        <position position="69"/>
    </location>
</feature>
<feature type="mutagenesis site" description="In PRP28-103; no growth at 15 and 37 degrees Celsius." evidence="9">
    <original>A</original>
    <variation>V</variation>
    <location>
        <position position="221"/>
    </location>
</feature>
<feature type="mutagenesis site" description="In PRP28-117; no growth at 15 degrees Celsius." evidence="9">
    <original>T</original>
    <variation>I</variation>
    <location>
        <position position="223"/>
    </location>
</feature>
<feature type="mutagenesis site" description="Lethal." evidence="9">
    <original>R</original>
    <variation>D</variation>
    <variation>E</variation>
    <location>
        <position position="264"/>
    </location>
</feature>
<feature type="mutagenesis site" description="In PRP28-99; no growth at 15 and 37 degrees Celsius." evidence="9">
    <original>E</original>
    <variation>Q</variation>
    <location>
        <position position="265"/>
    </location>
</feature>
<feature type="mutagenesis site" description="In PRP28-1; no growth at 15 degrees Celsius." evidence="8">
    <original>G</original>
    <variation>E</variation>
    <location>
        <position position="297"/>
    </location>
</feature>
<feature type="mutagenesis site" description="In PRP28-36; slow growth at 30 degrees Celsius, and no growth at 15 and 37 degrees Celsius." evidence="9">
    <original>T</original>
    <variation>I</variation>
    <location>
        <position position="317"/>
    </location>
</feature>
<feature type="mutagenesis site" description="Lethal." evidence="9">
    <original>T</original>
    <variation>Y</variation>
    <location>
        <position position="317"/>
    </location>
</feature>
<feature type="mutagenesis site" description="No growth at 15 and 37 degrees Celsius." evidence="9">
    <original>G</original>
    <variation>E</variation>
    <variation>V</variation>
    <location>
        <position position="319"/>
    </location>
</feature>
<feature type="mutagenesis site" description="In PRP28-32; no growth at 15 degrees Celsius." evidence="9">
    <original>M</original>
    <variation>I</variation>
    <location>
        <position position="376"/>
    </location>
</feature>
<feature type="mutagenesis site" description="In PRP28-102; no growth at 25 degrees Celsius or lower." evidence="9">
    <original>A</original>
    <variation>W</variation>
    <location>
        <position position="379"/>
    </location>
</feature>
<feature type="mutagenesis site" description="In PRP28-61; no growth at 37 degrees Celsius; when associated with L-468 and D-486." evidence="9">
    <original>P</original>
    <variation>L</variation>
    <location>
        <position position="438"/>
    </location>
</feature>
<feature type="mutagenesis site" description="In PRP28-56; no growth at 37 degrees Celsius; when associated with S-546 and E-584." evidence="9">
    <original>I</original>
    <variation>F</variation>
    <location>
        <position position="440"/>
    </location>
</feature>
<feature type="mutagenesis site" description="In PRP28-101; no growth at 15 and 37 degrees Celsius." evidence="9">
    <original>F</original>
    <variation>G</variation>
    <location>
        <position position="442"/>
    </location>
</feature>
<feature type="mutagenesis site" description="In PRP28-55; no growth at 37 degrees Celsius." evidence="9">
    <original>F</original>
    <variation>S</variation>
    <location>
        <position position="442"/>
    </location>
</feature>
<feature type="mutagenesis site" description="In PRP28-66; no growth at 37 degrees Celsius; when associated with A-541; V-549; N-580 and V-586." evidence="9">
    <original>A</original>
    <variation>T</variation>
    <location>
        <position position="449"/>
    </location>
</feature>
<feature type="mutagenesis site" description="In PRP28-61; no growth at 37 degrees Celsius; when associated with L-438 and D-486." evidence="9">
    <original>H</original>
    <variation>L</variation>
    <location>
        <position position="468"/>
    </location>
</feature>
<feature type="mutagenesis site" description="In PRP28-61; no growth at 37 degrees Celsius; when associated with L-438 and L-468." evidence="9">
    <original>N</original>
    <variation>D</variation>
    <location>
        <position position="486"/>
    </location>
</feature>
<feature type="mutagenesis site" description="In PRP28-52; no growth at 37 degrees Celsius." evidence="9">
    <original>M</original>
    <variation>K</variation>
    <location>
        <position position="491"/>
    </location>
</feature>
<feature type="mutagenesis site" description="In PRP28-86; lethal." evidence="9">
    <original>R</original>
    <variation>G</variation>
    <location>
        <position position="499"/>
    </location>
</feature>
<feature type="mutagenesis site" description="No growth at 15 degrees Celsius." evidence="9">
    <original>R</original>
    <variation>K</variation>
    <location>
        <position position="499"/>
    </location>
</feature>
<feature type="mutagenesis site" description="Lethal." evidence="9">
    <original>D</original>
    <variation>N</variation>
    <location>
        <position position="502"/>
    </location>
</feature>
<feature type="mutagenesis site" description="In PRP28-37; no growth at 37 degrees Celsius." evidence="9">
    <original>Y</original>
    <variation>D</variation>
    <location>
        <position position="521"/>
    </location>
</feature>
<feature type="mutagenesis site" description="Lethal." evidence="9">
    <original>R</original>
    <variation>D</variation>
    <location>
        <position position="527"/>
    </location>
</feature>
<feature type="mutagenesis site" description="In PRP28-66; no growth at 37 degrees Celsius; when associated with T-449; V-549; N-580 and V-586." evidence="9">
    <original>V</original>
    <variation>A</variation>
    <location>
        <position position="541"/>
    </location>
</feature>
<feature type="mutagenesis site" description="In PRP28-56; no growth at 37 degrees Celsius; when associated with F-440 and E-584." evidence="9">
    <original>D</original>
    <variation>S</variation>
    <location>
        <position position="546"/>
    </location>
</feature>
<feature type="mutagenesis site" description="In PRP28-66; no growth at 37 degrees Celsius; when associated with T-449; A-541; N-580 and V-586." evidence="9">
    <original>L</original>
    <variation>V</variation>
    <location>
        <position position="549"/>
    </location>
</feature>
<feature type="mutagenesis site" description="In PRP28-66; no growth at 37 degrees Celsius; when associated with T-449; A-541; V-549 and V-586." evidence="9">
    <original>K</original>
    <variation>N</variation>
    <location>
        <position position="580"/>
    </location>
</feature>
<feature type="mutagenesis site" description="In PRP28-56; no growth at 37 degrees Celsius; when associated with F-440 and S-546." evidence="9">
    <original>N</original>
    <variation>E</variation>
    <location>
        <position position="584"/>
    </location>
</feature>
<feature type="mutagenesis site" description="In PRP28-66; no growth at 37 degrees Celsius; when associated with T-449; A-541; V-549 and N-580." evidence="9">
    <original>I</original>
    <variation>V</variation>
    <location>
        <position position="586"/>
    </location>
</feature>
<feature type="sequence conflict" description="In Ref. 4; no nucleotide entry." evidence="10" ref="4">
    <original>A</original>
    <variation>R</variation>
    <location>
        <position position="493"/>
    </location>
</feature>
<feature type="helix" evidence="12">
    <location>
        <begin position="138"/>
        <end position="140"/>
    </location>
</feature>
<feature type="helix" evidence="12">
    <location>
        <begin position="143"/>
        <end position="145"/>
    </location>
</feature>
<feature type="helix" evidence="12">
    <location>
        <begin position="148"/>
        <end position="157"/>
    </location>
</feature>
<feature type="strand" evidence="12">
    <location>
        <begin position="160"/>
        <end position="166"/>
    </location>
</feature>
<feature type="strand" evidence="12">
    <location>
        <begin position="172"/>
        <end position="175"/>
    </location>
</feature>
<feature type="helix" evidence="12">
    <location>
        <begin position="182"/>
        <end position="190"/>
    </location>
</feature>
<feature type="helix" evidence="12">
    <location>
        <begin position="199"/>
        <end position="208"/>
    </location>
</feature>
<feature type="strand" evidence="12">
    <location>
        <begin position="217"/>
        <end position="220"/>
    </location>
</feature>
<feature type="helix" evidence="12">
    <location>
        <begin position="227"/>
        <end position="240"/>
    </location>
</feature>
<feature type="helix" evidence="12">
    <location>
        <begin position="247"/>
        <end position="253"/>
    </location>
</feature>
<feature type="strand" evidence="12">
    <location>
        <begin position="256"/>
        <end position="260"/>
    </location>
</feature>
<feature type="helix" evidence="12">
    <location>
        <begin position="264"/>
        <end position="283"/>
    </location>
</feature>
<feature type="strand" evidence="12">
    <location>
        <begin position="284"/>
        <end position="286"/>
    </location>
</feature>
<feature type="strand" evidence="12">
    <location>
        <begin position="291"/>
        <end position="294"/>
    </location>
</feature>
<feature type="helix" evidence="12">
    <location>
        <begin position="300"/>
        <end position="307"/>
    </location>
</feature>
<feature type="strand" evidence="12">
    <location>
        <begin position="312"/>
        <end position="316"/>
    </location>
</feature>
<feature type="helix" evidence="12">
    <location>
        <begin position="318"/>
        <end position="326"/>
    </location>
</feature>
<feature type="strand" evidence="12">
    <location>
        <begin position="337"/>
        <end position="340"/>
    </location>
</feature>
<feature type="helix" evidence="12">
    <location>
        <begin position="343"/>
        <end position="348"/>
    </location>
</feature>
<feature type="helix" evidence="12">
    <location>
        <begin position="352"/>
        <end position="365"/>
    </location>
</feature>
<feature type="strand" evidence="12">
    <location>
        <begin position="373"/>
        <end position="380"/>
    </location>
</feature>
<feature type="helix" evidence="12">
    <location>
        <begin position="383"/>
        <end position="392"/>
    </location>
</feature>
<feature type="strand" evidence="12">
    <location>
        <begin position="397"/>
        <end position="403"/>
    </location>
</feature>
<feature type="strand" evidence="12">
    <location>
        <begin position="410"/>
        <end position="417"/>
    </location>
</feature>
<feature type="helix" evidence="12">
    <location>
        <begin position="421"/>
        <end position="432"/>
    </location>
</feature>
<feature type="strand" evidence="12">
    <location>
        <begin position="439"/>
        <end position="442"/>
    </location>
</feature>
<feature type="helix" evidence="12">
    <location>
        <begin position="446"/>
        <end position="459"/>
    </location>
</feature>
<feature type="strand" evidence="12">
    <location>
        <begin position="464"/>
        <end position="467"/>
    </location>
</feature>
<feature type="helix" evidence="12">
    <location>
        <begin position="473"/>
        <end position="484"/>
    </location>
</feature>
<feature type="strand" evidence="12">
    <location>
        <begin position="487"/>
        <end position="493"/>
    </location>
</feature>
<feature type="turn" evidence="12">
    <location>
        <begin position="495"/>
        <end position="500"/>
    </location>
</feature>
<feature type="strand" evidence="12">
    <location>
        <begin position="506"/>
        <end position="513"/>
    </location>
</feature>
<feature type="helix" evidence="12">
    <location>
        <begin position="518"/>
        <end position="525"/>
    </location>
</feature>
<feature type="strand" evidence="12">
    <location>
        <begin position="534"/>
        <end position="541"/>
    </location>
</feature>
<feature type="helix" evidence="12">
    <location>
        <begin position="547"/>
        <end position="559"/>
    </location>
</feature>
<feature type="helix" evidence="12">
    <location>
        <begin position="570"/>
        <end position="576"/>
    </location>
</feature>
<accession>P23394</accession>
<accession>D6VSM3</accession>
<accession>P20450</accession>
<proteinExistence type="evidence at protein level"/>
<dbReference type="EC" id="3.6.4.13"/>
<dbReference type="EMBL" id="X56934">
    <property type="protein sequence ID" value="CAA40255.1"/>
    <property type="molecule type" value="Genomic_DNA"/>
</dbReference>
<dbReference type="EMBL" id="Z49701">
    <property type="protein sequence ID" value="CAA89729.1"/>
    <property type="molecule type" value="Genomic_DNA"/>
</dbReference>
<dbReference type="EMBL" id="BK006938">
    <property type="protein sequence ID" value="DAA12083.1"/>
    <property type="molecule type" value="Genomic_DNA"/>
</dbReference>
<dbReference type="PIR" id="A39624">
    <property type="entry name" value="A39624"/>
</dbReference>
<dbReference type="RefSeq" id="NP_010529.3">
    <property type="nucleotide sequence ID" value="NM_001180551.3"/>
</dbReference>
<dbReference type="PDB" id="4W7S">
    <property type="method" value="X-ray"/>
    <property type="resolution" value="2.54 A"/>
    <property type="chains" value="A/B=127-588"/>
</dbReference>
<dbReference type="PDB" id="5ZWN">
    <property type="method" value="EM"/>
    <property type="resolution" value="3.30 A"/>
    <property type="chains" value="y=1-588"/>
</dbReference>
<dbReference type="PDBsum" id="4W7S"/>
<dbReference type="PDBsum" id="5ZWN"/>
<dbReference type="EMDB" id="EMD-6973"/>
<dbReference type="SMR" id="P23394"/>
<dbReference type="BioGRID" id="32294">
    <property type="interactions" value="253"/>
</dbReference>
<dbReference type="ComplexPortal" id="CPX-25">
    <property type="entry name" value="U4/U6.U5 tri-small nuclear ribonucleoprotein complex"/>
</dbReference>
<dbReference type="ComplexPortal" id="CPX-29">
    <property type="entry name" value="U5 small nuclear ribonucleoprotein complex"/>
</dbReference>
<dbReference type="DIP" id="DIP-6324N"/>
<dbReference type="FunCoup" id="P23394">
    <property type="interactions" value="1074"/>
</dbReference>
<dbReference type="IntAct" id="P23394">
    <property type="interactions" value="20"/>
</dbReference>
<dbReference type="MINT" id="P23394"/>
<dbReference type="STRING" id="4932.YDR243C"/>
<dbReference type="GlyGen" id="P23394">
    <property type="glycosylation" value="1 site"/>
</dbReference>
<dbReference type="iPTMnet" id="P23394"/>
<dbReference type="PaxDb" id="4932-YDR243C"/>
<dbReference type="PeptideAtlas" id="P23394"/>
<dbReference type="EnsemblFungi" id="YDR243C_mRNA">
    <property type="protein sequence ID" value="YDR243C"/>
    <property type="gene ID" value="YDR243C"/>
</dbReference>
<dbReference type="GeneID" id="851830"/>
<dbReference type="KEGG" id="sce:YDR243C"/>
<dbReference type="AGR" id="SGD:S000002651"/>
<dbReference type="SGD" id="S000002651">
    <property type="gene designation" value="PRP28"/>
</dbReference>
<dbReference type="VEuPathDB" id="FungiDB:YDR243C"/>
<dbReference type="eggNOG" id="KOG0333">
    <property type="taxonomic scope" value="Eukaryota"/>
</dbReference>
<dbReference type="GeneTree" id="ENSGT00940000155606"/>
<dbReference type="HOGENOM" id="CLU_003041_11_4_1"/>
<dbReference type="InParanoid" id="P23394"/>
<dbReference type="OMA" id="IFINYKR"/>
<dbReference type="OrthoDB" id="196131at2759"/>
<dbReference type="BioCyc" id="YEAST:G3O-29816-MONOMER"/>
<dbReference type="BioGRID-ORCS" id="851830">
    <property type="hits" value="0 hits in 10 CRISPR screens"/>
</dbReference>
<dbReference type="EvolutionaryTrace" id="P23394"/>
<dbReference type="PRO" id="PR:P23394"/>
<dbReference type="Proteomes" id="UP000002311">
    <property type="component" value="Chromosome IV"/>
</dbReference>
<dbReference type="RNAct" id="P23394">
    <property type="molecule type" value="protein"/>
</dbReference>
<dbReference type="GO" id="GO:0071013">
    <property type="term" value="C:catalytic step 2 spliceosome"/>
    <property type="evidence" value="ECO:0000318"/>
    <property type="project" value="GO_Central"/>
</dbReference>
<dbReference type="GO" id="GO:0005737">
    <property type="term" value="C:cytoplasm"/>
    <property type="evidence" value="ECO:0007669"/>
    <property type="project" value="UniProtKB-SubCell"/>
</dbReference>
<dbReference type="GO" id="GO:0005634">
    <property type="term" value="C:nucleus"/>
    <property type="evidence" value="ECO:0000303"/>
    <property type="project" value="ComplexPortal"/>
</dbReference>
<dbReference type="GO" id="GO:0005681">
    <property type="term" value="C:spliceosomal complex"/>
    <property type="evidence" value="ECO:0000303"/>
    <property type="project" value="ComplexPortal"/>
</dbReference>
<dbReference type="GO" id="GO:0046540">
    <property type="term" value="C:U4/U6 x U5 tri-snRNP complex"/>
    <property type="evidence" value="ECO:0000303"/>
    <property type="project" value="ComplexPortal"/>
</dbReference>
<dbReference type="GO" id="GO:0005682">
    <property type="term" value="C:U5 snRNP"/>
    <property type="evidence" value="ECO:0000314"/>
    <property type="project" value="SGD"/>
</dbReference>
<dbReference type="GO" id="GO:0005524">
    <property type="term" value="F:ATP binding"/>
    <property type="evidence" value="ECO:0007669"/>
    <property type="project" value="UniProtKB-KW"/>
</dbReference>
<dbReference type="GO" id="GO:0016887">
    <property type="term" value="F:ATP hydrolysis activity"/>
    <property type="evidence" value="ECO:0007669"/>
    <property type="project" value="RHEA"/>
</dbReference>
<dbReference type="GO" id="GO:0000384">
    <property type="term" value="F:first spliceosomal transesterification activity"/>
    <property type="evidence" value="ECO:0000315"/>
    <property type="project" value="SGD"/>
</dbReference>
<dbReference type="GO" id="GO:0003729">
    <property type="term" value="F:mRNA binding"/>
    <property type="evidence" value="ECO:0000318"/>
    <property type="project" value="GO_Central"/>
</dbReference>
<dbReference type="GO" id="GO:0003723">
    <property type="term" value="F:RNA binding"/>
    <property type="evidence" value="ECO:0000314"/>
    <property type="project" value="SGD"/>
</dbReference>
<dbReference type="GO" id="GO:0003724">
    <property type="term" value="F:RNA helicase activity"/>
    <property type="evidence" value="ECO:0000250"/>
    <property type="project" value="SGD"/>
</dbReference>
<dbReference type="GO" id="GO:0000395">
    <property type="term" value="P:mRNA 5'-splice site recognition"/>
    <property type="evidence" value="ECO:0000315"/>
    <property type="project" value="SGD"/>
</dbReference>
<dbReference type="GO" id="GO:0000398">
    <property type="term" value="P:mRNA splicing, via spliceosome"/>
    <property type="evidence" value="ECO:0000318"/>
    <property type="project" value="GO_Central"/>
</dbReference>
<dbReference type="CDD" id="cd17945">
    <property type="entry name" value="DEADc_DDX23"/>
    <property type="match status" value="1"/>
</dbReference>
<dbReference type="CDD" id="cd18787">
    <property type="entry name" value="SF2_C_DEAD"/>
    <property type="match status" value="1"/>
</dbReference>
<dbReference type="Gene3D" id="3.40.50.300">
    <property type="entry name" value="P-loop containing nucleotide triphosphate hydrolases"/>
    <property type="match status" value="2"/>
</dbReference>
<dbReference type="InterPro" id="IPR011545">
    <property type="entry name" value="DEAD/DEAH_box_helicase_dom"/>
</dbReference>
<dbReference type="InterPro" id="IPR014001">
    <property type="entry name" value="Helicase_ATP-bd"/>
</dbReference>
<dbReference type="InterPro" id="IPR001650">
    <property type="entry name" value="Helicase_C-like"/>
</dbReference>
<dbReference type="InterPro" id="IPR027417">
    <property type="entry name" value="P-loop_NTPase"/>
</dbReference>
<dbReference type="InterPro" id="IPR000629">
    <property type="entry name" value="RNA-helicase_DEAD-box_CS"/>
</dbReference>
<dbReference type="PANTHER" id="PTHR47958">
    <property type="entry name" value="ATP-DEPENDENT RNA HELICASE DBP3"/>
    <property type="match status" value="1"/>
</dbReference>
<dbReference type="Pfam" id="PF00270">
    <property type="entry name" value="DEAD"/>
    <property type="match status" value="1"/>
</dbReference>
<dbReference type="Pfam" id="PF00271">
    <property type="entry name" value="Helicase_C"/>
    <property type="match status" value="1"/>
</dbReference>
<dbReference type="SMART" id="SM00487">
    <property type="entry name" value="DEXDc"/>
    <property type="match status" value="1"/>
</dbReference>
<dbReference type="SMART" id="SM00490">
    <property type="entry name" value="HELICc"/>
    <property type="match status" value="1"/>
</dbReference>
<dbReference type="SUPFAM" id="SSF52540">
    <property type="entry name" value="P-loop containing nucleoside triphosphate hydrolases"/>
    <property type="match status" value="1"/>
</dbReference>
<dbReference type="PROSITE" id="PS00039">
    <property type="entry name" value="DEAD_ATP_HELICASE"/>
    <property type="match status" value="1"/>
</dbReference>
<dbReference type="PROSITE" id="PS51192">
    <property type="entry name" value="HELICASE_ATP_BIND_1"/>
    <property type="match status" value="1"/>
</dbReference>
<dbReference type="PROSITE" id="PS51194">
    <property type="entry name" value="HELICASE_CTER"/>
    <property type="match status" value="1"/>
</dbReference>
<dbReference type="PROSITE" id="PS51195">
    <property type="entry name" value="Q_MOTIF"/>
    <property type="match status" value="1"/>
</dbReference>
<name>PRP28_YEAST</name>
<gene>
    <name type="primary">PRP28</name>
    <name type="ordered locus">YDR243C</name>
    <name type="ORF">YD8419.10C</name>
</gene>
<evidence type="ECO:0000255" key="1">
    <source>
        <dbReference type="PROSITE-ProRule" id="PRU00541"/>
    </source>
</evidence>
<evidence type="ECO:0000255" key="2">
    <source>
        <dbReference type="PROSITE-ProRule" id="PRU00542"/>
    </source>
</evidence>
<evidence type="ECO:0000256" key="3">
    <source>
        <dbReference type="SAM" id="MobiDB-lite"/>
    </source>
</evidence>
<evidence type="ECO:0000269" key="4">
    <source>
    </source>
</evidence>
<evidence type="ECO:0000269" key="5">
    <source>
    </source>
</evidence>
<evidence type="ECO:0000269" key="6">
    <source>
    </source>
</evidence>
<evidence type="ECO:0000269" key="7">
    <source>
    </source>
</evidence>
<evidence type="ECO:0000269" key="8">
    <source>
    </source>
</evidence>
<evidence type="ECO:0000269" key="9">
    <source>
    </source>
</evidence>
<evidence type="ECO:0000305" key="10"/>
<evidence type="ECO:0007744" key="11">
    <source>
    </source>
</evidence>
<evidence type="ECO:0007829" key="12">
    <source>
        <dbReference type="PDB" id="4W7S"/>
    </source>
</evidence>